<accession>Q9SIT1</accession>
<comment type="function">
    <text evidence="6">Involved in auxin signal transduction and cell expansion and proliferation regulation (PubMed:23613767).</text>
</comment>
<comment type="catalytic activity">
    <reaction evidence="10">
        <text>L-seryl-[protein] + ATP = O-phospho-L-seryl-[protein] + ADP + H(+)</text>
        <dbReference type="Rhea" id="RHEA:17989"/>
        <dbReference type="Rhea" id="RHEA-COMP:9863"/>
        <dbReference type="Rhea" id="RHEA-COMP:11604"/>
        <dbReference type="ChEBI" id="CHEBI:15378"/>
        <dbReference type="ChEBI" id="CHEBI:29999"/>
        <dbReference type="ChEBI" id="CHEBI:30616"/>
        <dbReference type="ChEBI" id="CHEBI:83421"/>
        <dbReference type="ChEBI" id="CHEBI:456216"/>
        <dbReference type="EC" id="2.7.11.1"/>
    </reaction>
</comment>
<comment type="catalytic activity">
    <reaction evidence="10">
        <text>L-threonyl-[protein] + ATP = O-phospho-L-threonyl-[protein] + ADP + H(+)</text>
        <dbReference type="Rhea" id="RHEA:46608"/>
        <dbReference type="Rhea" id="RHEA-COMP:11060"/>
        <dbReference type="Rhea" id="RHEA-COMP:11605"/>
        <dbReference type="ChEBI" id="CHEBI:15378"/>
        <dbReference type="ChEBI" id="CHEBI:30013"/>
        <dbReference type="ChEBI" id="CHEBI:30616"/>
        <dbReference type="ChEBI" id="CHEBI:61977"/>
        <dbReference type="ChEBI" id="CHEBI:456216"/>
        <dbReference type="EC" id="2.7.11.1"/>
    </reaction>
</comment>
<comment type="interaction">
    <interactant intactId="EBI-16896864">
        <id>Q9SIT1</id>
    </interactant>
    <interactant intactId="EBI-16954682">
        <id>Q9M9S4</id>
        <label>At1g14390</label>
    </interactant>
    <organismsDiffer>false</organismsDiffer>
    <experiments>2</experiments>
</comment>
<comment type="interaction">
    <interactant intactId="EBI-16896864">
        <id>Q9SIT1</id>
    </interactant>
    <interactant intactId="EBI-20651261">
        <id>Q9SHI2</id>
        <label>At1g17230</label>
    </interactant>
    <organismsDiffer>false</organismsDiffer>
    <experiments>4</experiments>
</comment>
<comment type="interaction">
    <interactant intactId="EBI-16896864">
        <id>Q9SIT1</id>
    </interactant>
    <interactant intactId="EBI-20651385">
        <id>Q9SH71</id>
        <label>At1g64210</label>
    </interactant>
    <organismsDiffer>false</organismsDiffer>
    <experiments>2</experiments>
</comment>
<comment type="interaction">
    <interactant intactId="EBI-16896864">
        <id>Q9SIT1</id>
    </interactant>
    <interactant intactId="EBI-1238661">
        <id>Q9M9C5</id>
        <label>At1g68400</label>
    </interactant>
    <organismsDiffer>false</organismsDiffer>
    <experiments>4</experiments>
</comment>
<comment type="interaction">
    <interactant intactId="EBI-16896864">
        <id>Q9SIT1</id>
    </interactant>
    <interactant intactId="EBI-20651541">
        <id>C0LGJ9</id>
        <label>At2g02780</label>
    </interactant>
    <organismsDiffer>false</organismsDiffer>
    <experiments>2</experiments>
</comment>
<comment type="interaction">
    <interactant intactId="EBI-16896864">
        <id>Q9SIT1</id>
    </interactant>
    <interactant intactId="EBI-16934827">
        <id>Q8W4S5</id>
        <label>At5g63710</label>
    </interactant>
    <organismsDiffer>false</organismsDiffer>
    <experiments>3</experiments>
</comment>
<comment type="interaction">
    <interactant intactId="EBI-16896864">
        <id>Q9SIT1</id>
    </interactant>
    <interactant intactId="EBI-16914444">
        <id>Q9LJY0</id>
        <label>PRK4</label>
    </interactant>
    <organismsDiffer>false</organismsDiffer>
    <experiments>2</experiments>
</comment>
<comment type="subcellular location">
    <subcellularLocation>
        <location evidence="2">Membrane</location>
        <topology evidence="2">Single-pass membrane protein</topology>
    </subcellularLocation>
</comment>
<comment type="tissue specificity">
    <text evidence="6">Expressed in roots, leaves, stems, siliques and flowers.</text>
</comment>
<comment type="domain">
    <text evidence="1">The leucine-rich repeat (LRR) domain is disrupted by a non-LRR region, resulting in the formation of two LRR solenoid structures shaped like the Arabic number '7'. This is strikingly different from the horseshoe structures of the canonical LRR proteins.</text>
</comment>
<comment type="disruption phenotype">
    <text evidence="6 7">No visible phenotype (PubMed:23613767). Tmk1 and tmk3 double mutants, tmk2 and tmk3 double mutants, tmk3 and tmk4 double mutants, tmk1, tmk2 and tmk3 triple mutants and tmk2, tmk3 and tmk4 triple mutants have no visible phenotypes (PubMed:23613767). Tmk1, tmk3 and tmk4 triple mutants have a severe reduction in organ size, a substantial delay in growth and development, and a decrease in fertility (PubMed:23613767). Tmk1, tmk2, tmk3 and tmk4 quadruple mutants are embryo lethal (PubMed:23613767, PubMed:24578577).</text>
</comment>
<comment type="similarity">
    <text evidence="10">Belongs to the protein kinase superfamily. Ser/Thr protein kinase family.</text>
</comment>
<protein>
    <recommendedName>
        <fullName evidence="8">Receptor-like kinase TMK3</fullName>
        <ecNumber evidence="10">2.7.11.1</ecNumber>
    </recommendedName>
    <alternativeName>
        <fullName evidence="9">BARK1-like kinase 2</fullName>
    </alternativeName>
    <alternativeName>
        <fullName evidence="8">Leucine-rich repeat receptor-like kinases TMK3</fullName>
    </alternativeName>
    <alternativeName>
        <fullName evidence="8">Transmembrane kinase 3</fullName>
    </alternativeName>
</protein>
<name>TMK3_ARATH</name>
<dbReference type="EC" id="2.7.11.1" evidence="10"/>
<dbReference type="EMBL" id="FJ708686">
    <property type="protein sequence ID" value="ACN59281.1"/>
    <property type="molecule type" value="mRNA"/>
</dbReference>
<dbReference type="EMBL" id="AC007069">
    <property type="protein sequence ID" value="AAD21776.1"/>
    <property type="molecule type" value="Genomic_DNA"/>
</dbReference>
<dbReference type="EMBL" id="CP002685">
    <property type="protein sequence ID" value="AEC05504.1"/>
    <property type="molecule type" value="Genomic_DNA"/>
</dbReference>
<dbReference type="PIR" id="E84429">
    <property type="entry name" value="E84429"/>
</dbReference>
<dbReference type="RefSeq" id="NP_178291.1">
    <property type="nucleotide sequence ID" value="NM_126243.4"/>
</dbReference>
<dbReference type="PDB" id="7BRC">
    <property type="method" value="X-ray"/>
    <property type="resolution" value="2.06 A"/>
    <property type="chains" value="A=25-482"/>
</dbReference>
<dbReference type="PDBsum" id="7BRC"/>
<dbReference type="SMR" id="Q9SIT1"/>
<dbReference type="FunCoup" id="Q9SIT1">
    <property type="interactions" value="164"/>
</dbReference>
<dbReference type="IntAct" id="Q9SIT1">
    <property type="interactions" value="35"/>
</dbReference>
<dbReference type="STRING" id="3702.Q9SIT1"/>
<dbReference type="GlyCosmos" id="Q9SIT1">
    <property type="glycosylation" value="8 sites, No reported glycans"/>
</dbReference>
<dbReference type="GlyGen" id="Q9SIT1">
    <property type="glycosylation" value="8 sites"/>
</dbReference>
<dbReference type="iPTMnet" id="Q9SIT1"/>
<dbReference type="SwissPalm" id="Q9SIT1"/>
<dbReference type="PaxDb" id="3702-AT2G01820.1"/>
<dbReference type="ProteomicsDB" id="232607"/>
<dbReference type="EnsemblPlants" id="AT2G01820.1">
    <property type="protein sequence ID" value="AT2G01820.1"/>
    <property type="gene ID" value="AT2G01820"/>
</dbReference>
<dbReference type="GeneID" id="814713"/>
<dbReference type="Gramene" id="AT2G01820.1">
    <property type="protein sequence ID" value="AT2G01820.1"/>
    <property type="gene ID" value="AT2G01820"/>
</dbReference>
<dbReference type="KEGG" id="ath:AT2G01820"/>
<dbReference type="Araport" id="AT2G01820"/>
<dbReference type="TAIR" id="AT2G01820"/>
<dbReference type="eggNOG" id="ENOG502QPQ4">
    <property type="taxonomic scope" value="Eukaryota"/>
</dbReference>
<dbReference type="HOGENOM" id="CLU_000288_114_6_1"/>
<dbReference type="InParanoid" id="Q9SIT1"/>
<dbReference type="OMA" id="MAHIVNV"/>
<dbReference type="PhylomeDB" id="Q9SIT1"/>
<dbReference type="PRO" id="PR:Q9SIT1"/>
<dbReference type="Proteomes" id="UP000006548">
    <property type="component" value="Chromosome 2"/>
</dbReference>
<dbReference type="ExpressionAtlas" id="Q9SIT1">
    <property type="expression patterns" value="baseline and differential"/>
</dbReference>
<dbReference type="GO" id="GO:0009505">
    <property type="term" value="C:plant-type cell wall"/>
    <property type="evidence" value="ECO:0007005"/>
    <property type="project" value="TAIR"/>
</dbReference>
<dbReference type="GO" id="GO:0005886">
    <property type="term" value="C:plasma membrane"/>
    <property type="evidence" value="ECO:0007005"/>
    <property type="project" value="TAIR"/>
</dbReference>
<dbReference type="GO" id="GO:0009506">
    <property type="term" value="C:plasmodesma"/>
    <property type="evidence" value="ECO:0007005"/>
    <property type="project" value="TAIR"/>
</dbReference>
<dbReference type="GO" id="GO:0005524">
    <property type="term" value="F:ATP binding"/>
    <property type="evidence" value="ECO:0007669"/>
    <property type="project" value="UniProtKB-KW"/>
</dbReference>
<dbReference type="GO" id="GO:0106310">
    <property type="term" value="F:protein serine kinase activity"/>
    <property type="evidence" value="ECO:0007669"/>
    <property type="project" value="RHEA"/>
</dbReference>
<dbReference type="GO" id="GO:0004674">
    <property type="term" value="F:protein serine/threonine kinase activity"/>
    <property type="evidence" value="ECO:0007669"/>
    <property type="project" value="UniProtKB-KW"/>
</dbReference>
<dbReference type="GO" id="GO:0009555">
    <property type="term" value="P:pollen development"/>
    <property type="evidence" value="ECO:0000315"/>
    <property type="project" value="TAIR"/>
</dbReference>
<dbReference type="CDD" id="cd14066">
    <property type="entry name" value="STKc_IRAK"/>
    <property type="match status" value="1"/>
</dbReference>
<dbReference type="FunFam" id="3.80.10.10:FF:000129">
    <property type="entry name" value="Leucine-rich repeat receptor-like kinase"/>
    <property type="match status" value="1"/>
</dbReference>
<dbReference type="FunFam" id="1.10.510.10:FF:000198">
    <property type="entry name" value="receptor protein kinase TMK1"/>
    <property type="match status" value="1"/>
</dbReference>
<dbReference type="FunFam" id="3.30.200.20:FF:000226">
    <property type="entry name" value="receptor protein kinase TMK1"/>
    <property type="match status" value="1"/>
</dbReference>
<dbReference type="FunFam" id="3.80.10.10:FF:000190">
    <property type="entry name" value="Receptor-like kinase TMK4"/>
    <property type="match status" value="1"/>
</dbReference>
<dbReference type="Gene3D" id="3.30.200.20">
    <property type="entry name" value="Phosphorylase Kinase, domain 1"/>
    <property type="match status" value="1"/>
</dbReference>
<dbReference type="Gene3D" id="3.80.10.10">
    <property type="entry name" value="Ribonuclease Inhibitor"/>
    <property type="match status" value="2"/>
</dbReference>
<dbReference type="Gene3D" id="1.10.510.10">
    <property type="entry name" value="Transferase(Phosphotransferase) domain 1"/>
    <property type="match status" value="1"/>
</dbReference>
<dbReference type="InterPro" id="IPR052422">
    <property type="entry name" value="Auxin_Ser/Thr_Kinase"/>
</dbReference>
<dbReference type="InterPro" id="IPR011009">
    <property type="entry name" value="Kinase-like_dom_sf"/>
</dbReference>
<dbReference type="InterPro" id="IPR001611">
    <property type="entry name" value="Leu-rich_rpt"/>
</dbReference>
<dbReference type="InterPro" id="IPR003591">
    <property type="entry name" value="Leu-rich_rpt_typical-subtyp"/>
</dbReference>
<dbReference type="InterPro" id="IPR032675">
    <property type="entry name" value="LRR_dom_sf"/>
</dbReference>
<dbReference type="InterPro" id="IPR013210">
    <property type="entry name" value="LRR_N_plant-typ"/>
</dbReference>
<dbReference type="InterPro" id="IPR000719">
    <property type="entry name" value="Prot_kinase_dom"/>
</dbReference>
<dbReference type="InterPro" id="IPR017441">
    <property type="entry name" value="Protein_kinase_ATP_BS"/>
</dbReference>
<dbReference type="InterPro" id="IPR008271">
    <property type="entry name" value="Ser/Thr_kinase_AS"/>
</dbReference>
<dbReference type="PANTHER" id="PTHR47986">
    <property type="entry name" value="OSJNBA0070M12.3 PROTEIN"/>
    <property type="match status" value="1"/>
</dbReference>
<dbReference type="PANTHER" id="PTHR47986:SF24">
    <property type="entry name" value="RECEPTOR-LIKE KINASE TMK3"/>
    <property type="match status" value="1"/>
</dbReference>
<dbReference type="Pfam" id="PF00560">
    <property type="entry name" value="LRR_1"/>
    <property type="match status" value="2"/>
</dbReference>
<dbReference type="Pfam" id="PF13855">
    <property type="entry name" value="LRR_8"/>
    <property type="match status" value="1"/>
</dbReference>
<dbReference type="Pfam" id="PF08263">
    <property type="entry name" value="LRRNT_2"/>
    <property type="match status" value="2"/>
</dbReference>
<dbReference type="Pfam" id="PF00069">
    <property type="entry name" value="Pkinase"/>
    <property type="match status" value="1"/>
</dbReference>
<dbReference type="SMART" id="SM00369">
    <property type="entry name" value="LRR_TYP"/>
    <property type="match status" value="5"/>
</dbReference>
<dbReference type="SMART" id="SM00220">
    <property type="entry name" value="S_TKc"/>
    <property type="match status" value="1"/>
</dbReference>
<dbReference type="SUPFAM" id="SSF52058">
    <property type="entry name" value="L domain-like"/>
    <property type="match status" value="2"/>
</dbReference>
<dbReference type="SUPFAM" id="SSF56112">
    <property type="entry name" value="Protein kinase-like (PK-like)"/>
    <property type="match status" value="1"/>
</dbReference>
<dbReference type="PROSITE" id="PS00107">
    <property type="entry name" value="PROTEIN_KINASE_ATP"/>
    <property type="match status" value="1"/>
</dbReference>
<dbReference type="PROSITE" id="PS50011">
    <property type="entry name" value="PROTEIN_KINASE_DOM"/>
    <property type="match status" value="1"/>
</dbReference>
<dbReference type="PROSITE" id="PS00108">
    <property type="entry name" value="PROTEIN_KINASE_ST"/>
    <property type="match status" value="1"/>
</dbReference>
<sequence>MSNSHLGTLCFIISLLGLANFSLSQTGLDDSTMQSLKSSLNLTSDVDWSNPNPCKWQSVQCDGSNRVTKIQLKQKGIRGTLPTNLQSLSELVILELFLNRISGPIPDLSGLSRLQTLNLHDNLFTSVPKNLFSGMSSLQEMYLENNPFDPWVIPDTVKEATSLQNLTLSNCSIIGKIPDFFGSQSLPSLTNLKLSQNGLEGELPMSFAGTSIQSLFLNGQKLNGSISVLGNMTSLVEVSLQGNQFSGPIPDLSGLVSLRVFNVRENQLTGVVPQSLVSLSSLTTVNLTNNYLQGPTPLFGKSVGVDIVNNMNSFCTNVAGEACDPRVDTLVSVAESFGYPVKLAESWKGNNPCVNWVGITCSGGNITVVNMRKQDLSGTISPSLAKLTSLETINLADNKLSGHIPDELTTLSKLRLLDVSNNDFYGIPPKFRDTVTLVTEGNANMGKNGPNKTSDAPGASPGSKPSGGSDGSETSKKSSNVKIIVPVVGGVVGALCLVGLGVCLYAKKRKRPARVQSPSSNMVIHPHHSGDNDDIKLTVAASSLNSGGGSDSYSHSGSAASDIHVVEAGNLVISIQVLRNVTNNFSEENILGRGGFGTVYKGELHDGTKIAVKRMESSVVSDKGLTEFKSEITVLTKMRHRHLVALLGYCLDGNERLLVYEYMPQGTLSQHLFHWKEEGRKPLDWTRRLAIALDVARGVEYLHTLAHQSFIHRDLKPSNILLGDDMRAKVSDFGLVRLAPDGKYSIETRVAGTFGYLAPEYAVTGRVTTKVDIFSLGVILMELITGRKALDETQPEDSVHLVTWFRRVAASKDENAFKNAIDPNISLDDDTVASIEKVWELAGHCCAREPYQRPDMAHIVNVLSSLTVQWKPTETDPDDVYGIDYDMPLPQVLKKWQAFEGLSQTADDSGSSSSAYGSKDNTQTSIPTRPSGFADSFTSVDGR</sequence>
<gene>
    <name evidence="8" type="primary">TMK3</name>
    <name evidence="9" type="synonym">BLK2</name>
    <name evidence="11" type="ordered locus">At2g01820</name>
    <name evidence="12" type="ORF">T23K3.1</name>
</gene>
<reference key="1">
    <citation type="journal article" date="2010" name="BMC Genomics">
        <title>Genome-wide cloning and sequence analysis of leucine-rich repeat receptor-like protein kinase genes in Arabidopsis thaliana.</title>
        <authorList>
            <person name="Gou X."/>
            <person name="He K."/>
            <person name="Yang H."/>
            <person name="Yuan T."/>
            <person name="Lin H."/>
            <person name="Clouse S.D."/>
            <person name="Li J."/>
        </authorList>
    </citation>
    <scope>NUCLEOTIDE SEQUENCE [MRNA]</scope>
</reference>
<reference key="2">
    <citation type="journal article" date="1999" name="Nature">
        <title>Sequence and analysis of chromosome 2 of the plant Arabidopsis thaliana.</title>
        <authorList>
            <person name="Lin X."/>
            <person name="Kaul S."/>
            <person name="Rounsley S.D."/>
            <person name="Shea T.P."/>
            <person name="Benito M.-I."/>
            <person name="Town C.D."/>
            <person name="Fujii C.Y."/>
            <person name="Mason T.M."/>
            <person name="Bowman C.L."/>
            <person name="Barnstead M.E."/>
            <person name="Feldblyum T.V."/>
            <person name="Buell C.R."/>
            <person name="Ketchum K.A."/>
            <person name="Lee J.J."/>
            <person name="Ronning C.M."/>
            <person name="Koo H.L."/>
            <person name="Moffat K.S."/>
            <person name="Cronin L.A."/>
            <person name="Shen M."/>
            <person name="Pai G."/>
            <person name="Van Aken S."/>
            <person name="Umayam L."/>
            <person name="Tallon L.J."/>
            <person name="Gill J.E."/>
            <person name="Adams M.D."/>
            <person name="Carrera A.J."/>
            <person name="Creasy T.H."/>
            <person name="Goodman H.M."/>
            <person name="Somerville C.R."/>
            <person name="Copenhaver G.P."/>
            <person name="Preuss D."/>
            <person name="Nierman W.C."/>
            <person name="White O."/>
            <person name="Eisen J.A."/>
            <person name="Salzberg S.L."/>
            <person name="Fraser C.M."/>
            <person name="Venter J.C."/>
        </authorList>
    </citation>
    <scope>NUCLEOTIDE SEQUENCE [LARGE SCALE GENOMIC DNA]</scope>
    <source>
        <strain>cv. Columbia</strain>
    </source>
</reference>
<reference key="3">
    <citation type="journal article" date="2017" name="Plant J.">
        <title>Araport11: a complete reannotation of the Arabidopsis thaliana reference genome.</title>
        <authorList>
            <person name="Cheng C.Y."/>
            <person name="Krishnakumar V."/>
            <person name="Chan A.P."/>
            <person name="Thibaud-Nissen F."/>
            <person name="Schobel S."/>
            <person name="Town C.D."/>
        </authorList>
    </citation>
    <scope>GENOME REANNOTATION</scope>
    <source>
        <strain>cv. Columbia</strain>
    </source>
</reference>
<reference key="4">
    <citation type="journal article" date="2003" name="Curr. Opin. Plant Biol.">
        <title>Using mutant alleles to determine the structure and function of leucine-rich repeat receptor-like kinases.</title>
        <authorList>
            <person name="Dievart A."/>
            <person name="Clark S.E."/>
        </authorList>
    </citation>
    <scope>GENE FAMILY</scope>
</reference>
<reference key="5">
    <citation type="journal article" date="2013" name="PLoS ONE">
        <title>The TMK subfamily of receptor-like kinases in Arabidopsis display an essential role in growth and a reduced sensitivity to auxin.</title>
        <authorList>
            <person name="Dai N."/>
            <person name="Wang W."/>
            <person name="Patterson S.E."/>
            <person name="Bleecker A.B."/>
        </authorList>
    </citation>
    <scope>TISSUE SPECIFICITY</scope>
    <scope>DISRUPTION PHENOTYPE</scope>
    <scope>GENE FAMILY</scope>
    <scope>NOMENCLATURE</scope>
</reference>
<reference key="6">
    <citation type="journal article" date="2013" name="Plant Cell Physiol.">
        <title>Identification of Arabidopsis BAK1-associating receptor-like kinase 1 (BARK1) and characterization of its gene expression and brassinosteroid-regulated root phenotypes.</title>
        <authorList>
            <person name="Kim M.H."/>
            <person name="Kim Y."/>
            <person name="Kim J.W."/>
            <person name="Lee H.S."/>
            <person name="Lee W.S."/>
            <person name="Kim S.K."/>
            <person name="Wang Z.Y."/>
            <person name="Kim S.H."/>
        </authorList>
    </citation>
    <scope>GENE FAMILY</scope>
    <scope>NOMENCLATURE</scope>
</reference>
<reference key="7">
    <citation type="journal article" date="2014" name="Science">
        <title>Cell surface ABP1-TMK auxin-sensing complex activates ROP GTPase signaling.</title>
        <authorList>
            <person name="Xu T."/>
            <person name="Dai N."/>
            <person name="Chen J."/>
            <person name="Nagawa S."/>
            <person name="Cao M."/>
            <person name="Li H."/>
            <person name="Zhou Z."/>
            <person name="Chen X."/>
            <person name="De Rycke R."/>
            <person name="Rakusova H."/>
            <person name="Wang W."/>
            <person name="Jones A.M."/>
            <person name="Friml J."/>
            <person name="Patterson S.E."/>
            <person name="Bleecker A.B."/>
            <person name="Yang Z."/>
        </authorList>
    </citation>
    <scope>DISRUPTION PHENOTYPE</scope>
</reference>
<feature type="signal peptide" evidence="2">
    <location>
        <begin position="1"/>
        <end position="24"/>
    </location>
</feature>
<feature type="chain" id="PRO_0000433431" description="Receptor-like kinase TMK3">
    <location>
        <begin position="25"/>
        <end position="943"/>
    </location>
</feature>
<feature type="topological domain" description="Extracellular" evidence="10">
    <location>
        <begin position="25"/>
        <end position="482"/>
    </location>
</feature>
<feature type="transmembrane region" description="Helical" evidence="2">
    <location>
        <begin position="483"/>
        <end position="503"/>
    </location>
</feature>
<feature type="topological domain" description="Cytoplasmic" evidence="10">
    <location>
        <begin position="504"/>
        <end position="943"/>
    </location>
</feature>
<feature type="repeat" description="LRR 1" evidence="10">
    <location>
        <begin position="64"/>
        <end position="88"/>
    </location>
</feature>
<feature type="repeat" description="LRR 2" evidence="10">
    <location>
        <begin position="89"/>
        <end position="111"/>
    </location>
</feature>
<feature type="repeat" description="LRR 3" evidence="10">
    <location>
        <begin position="112"/>
        <end position="134"/>
    </location>
</feature>
<feature type="repeat" description="LRR 4" evidence="10">
    <location>
        <begin position="136"/>
        <end position="160"/>
    </location>
</feature>
<feature type="repeat" description="LRR 5" evidence="10">
    <location>
        <begin position="162"/>
        <end position="183"/>
    </location>
</feature>
<feature type="repeat" description="LRR 6" evidence="10">
    <location>
        <begin position="186"/>
        <end position="210"/>
    </location>
</feature>
<feature type="repeat" description="LRR 7" evidence="10">
    <location>
        <begin position="212"/>
        <end position="232"/>
    </location>
</feature>
<feature type="repeat" description="LRR 8" evidence="10">
    <location>
        <begin position="233"/>
        <end position="254"/>
    </location>
</feature>
<feature type="repeat" description="LRR 9" evidence="10">
    <location>
        <begin position="255"/>
        <end position="279"/>
    </location>
</feature>
<feature type="repeat" description="LRR 10" evidence="10">
    <location>
        <begin position="281"/>
        <end position="301"/>
    </location>
</feature>
<feature type="repeat" description="LRR 11" evidence="10">
    <location>
        <begin position="363"/>
        <end position="386"/>
    </location>
</feature>
<feature type="repeat" description="LRR 12" evidence="10">
    <location>
        <begin position="387"/>
        <end position="410"/>
    </location>
</feature>
<feature type="repeat" description="LRR 13" evidence="10">
    <location>
        <begin position="411"/>
        <end position="438"/>
    </location>
</feature>
<feature type="domain" description="Protein kinase" evidence="3">
    <location>
        <begin position="585"/>
        <end position="866"/>
    </location>
</feature>
<feature type="region of interest" description="Disordered" evidence="5">
    <location>
        <begin position="441"/>
        <end position="476"/>
    </location>
</feature>
<feature type="region of interest" description="Disordered" evidence="5">
    <location>
        <begin position="514"/>
        <end position="534"/>
    </location>
</feature>
<feature type="region of interest" description="Disordered" evidence="5">
    <location>
        <begin position="904"/>
        <end position="943"/>
    </location>
</feature>
<feature type="compositionally biased region" description="Low complexity" evidence="5">
    <location>
        <begin position="454"/>
        <end position="467"/>
    </location>
</feature>
<feature type="compositionally biased region" description="Low complexity" evidence="5">
    <location>
        <begin position="906"/>
        <end position="918"/>
    </location>
</feature>
<feature type="compositionally biased region" description="Polar residues" evidence="5">
    <location>
        <begin position="919"/>
        <end position="928"/>
    </location>
</feature>
<feature type="active site" description="Proton acceptor" evidence="3">
    <location>
        <position position="714"/>
    </location>
</feature>
<feature type="binding site" evidence="3">
    <location>
        <begin position="591"/>
        <end position="599"/>
    </location>
    <ligand>
        <name>ATP</name>
        <dbReference type="ChEBI" id="CHEBI:30616"/>
    </ligand>
</feature>
<feature type="binding site" evidence="3">
    <location>
        <position position="613"/>
    </location>
    <ligand>
        <name>ATP</name>
        <dbReference type="ChEBI" id="CHEBI:30616"/>
    </ligand>
</feature>
<feature type="glycosylation site" description="N-linked (GlcNAc...) asparagine" evidence="4">
    <location>
        <position position="41"/>
    </location>
</feature>
<feature type="glycosylation site" description="N-linked (GlcNAc...) asparagine" evidence="4">
    <location>
        <position position="165"/>
    </location>
</feature>
<feature type="glycosylation site" description="N-linked (GlcNAc...) asparagine" evidence="4">
    <location>
        <position position="170"/>
    </location>
</feature>
<feature type="glycosylation site" description="N-linked (GlcNAc...) asparagine" evidence="4">
    <location>
        <position position="223"/>
    </location>
</feature>
<feature type="glycosylation site" description="N-linked (GlcNAc...) asparagine" evidence="4">
    <location>
        <position position="231"/>
    </location>
</feature>
<feature type="glycosylation site" description="N-linked (GlcNAc...) asparagine" evidence="4">
    <location>
        <position position="286"/>
    </location>
</feature>
<feature type="glycosylation site" description="N-linked (GlcNAc...) asparagine" evidence="4">
    <location>
        <position position="365"/>
    </location>
</feature>
<feature type="glycosylation site" description="N-linked (GlcNAc...) asparagine" evidence="4">
    <location>
        <position position="451"/>
    </location>
</feature>
<feature type="disulfide bond" evidence="1">
    <location>
        <begin position="54"/>
        <end position="61"/>
    </location>
</feature>
<feature type="disulfide bond" evidence="1">
    <location>
        <begin position="315"/>
        <end position="323"/>
    </location>
</feature>
<feature type="disulfide bond" evidence="1">
    <location>
        <begin position="353"/>
        <end position="361"/>
    </location>
</feature>
<feature type="helix" evidence="14">
    <location>
        <begin position="30"/>
        <end position="39"/>
    </location>
</feature>
<feature type="strand" evidence="14">
    <location>
        <begin position="50"/>
        <end position="52"/>
    </location>
</feature>
<feature type="helix" evidence="14">
    <location>
        <begin position="53"/>
        <end position="55"/>
    </location>
</feature>
<feature type="strand" evidence="14">
    <location>
        <begin position="59"/>
        <end position="61"/>
    </location>
</feature>
<feature type="strand" evidence="14">
    <location>
        <begin position="67"/>
        <end position="71"/>
    </location>
</feature>
<feature type="helix" evidence="14">
    <location>
        <begin position="85"/>
        <end position="87"/>
    </location>
</feature>
<feature type="strand" evidence="14">
    <location>
        <begin position="93"/>
        <end position="95"/>
    </location>
</feature>
<feature type="strand" evidence="14">
    <location>
        <begin position="98"/>
        <end position="104"/>
    </location>
</feature>
<feature type="strand" evidence="14">
    <location>
        <begin position="116"/>
        <end position="118"/>
    </location>
</feature>
<feature type="strand" evidence="14">
    <location>
        <begin position="121"/>
        <end position="126"/>
    </location>
</feature>
<feature type="turn" evidence="14">
    <location>
        <begin position="129"/>
        <end position="134"/>
    </location>
</feature>
<feature type="strand" evidence="14">
    <location>
        <begin position="140"/>
        <end position="142"/>
    </location>
</feature>
<feature type="helix" evidence="14">
    <location>
        <begin position="155"/>
        <end position="159"/>
    </location>
</feature>
<feature type="strand" evidence="14">
    <location>
        <begin position="165"/>
        <end position="167"/>
    </location>
</feature>
<feature type="turn" evidence="14">
    <location>
        <begin position="183"/>
        <end position="185"/>
    </location>
</feature>
<feature type="strand" evidence="14">
    <location>
        <begin position="191"/>
        <end position="193"/>
    </location>
</feature>
<feature type="helix" evidence="14">
    <location>
        <begin position="205"/>
        <end position="207"/>
    </location>
</feature>
<feature type="strand" evidence="14">
    <location>
        <begin position="214"/>
        <end position="216"/>
    </location>
</feature>
<feature type="strand" evidence="14">
    <location>
        <begin position="219"/>
        <end position="224"/>
    </location>
</feature>
<feature type="helix" evidence="14">
    <location>
        <begin position="227"/>
        <end position="231"/>
    </location>
</feature>
<feature type="strand" evidence="14">
    <location>
        <begin position="236"/>
        <end position="239"/>
    </location>
</feature>
<feature type="strand" evidence="14">
    <location>
        <begin position="242"/>
        <end position="247"/>
    </location>
</feature>
<feature type="strand" evidence="14">
    <location>
        <begin position="260"/>
        <end position="262"/>
    </location>
</feature>
<feature type="strand" evidence="14">
    <location>
        <begin position="265"/>
        <end position="271"/>
    </location>
</feature>
<feature type="helix" evidence="14">
    <location>
        <begin position="274"/>
        <end position="277"/>
    </location>
</feature>
<feature type="strand" evidence="14">
    <location>
        <begin position="284"/>
        <end position="286"/>
    </location>
</feature>
<feature type="strand" evidence="14">
    <location>
        <begin position="289"/>
        <end position="295"/>
    </location>
</feature>
<feature type="strand" evidence="14">
    <location>
        <begin position="303"/>
        <end position="306"/>
    </location>
</feature>
<feature type="strand" evidence="14">
    <location>
        <begin position="311"/>
        <end position="315"/>
    </location>
</feature>
<feature type="helix" evidence="14">
    <location>
        <begin position="325"/>
        <end position="336"/>
    </location>
</feature>
<feature type="helix" evidence="14">
    <location>
        <begin position="341"/>
        <end position="346"/>
    </location>
</feature>
<feature type="turn" evidence="14">
    <location>
        <begin position="352"/>
        <end position="355"/>
    </location>
</feature>
<feature type="strand" evidence="14">
    <location>
        <begin position="359"/>
        <end position="362"/>
    </location>
</feature>
<feature type="strand" evidence="14">
    <location>
        <begin position="365"/>
        <end position="370"/>
    </location>
</feature>
<feature type="helix" evidence="14">
    <location>
        <begin position="382"/>
        <end position="386"/>
    </location>
</feature>
<feature type="strand" evidence="14">
    <location>
        <begin position="392"/>
        <end position="394"/>
    </location>
</feature>
<feature type="strand" evidence="14">
    <location>
        <begin position="397"/>
        <end position="402"/>
    </location>
</feature>
<feature type="helix" evidence="14">
    <location>
        <begin position="406"/>
        <end position="410"/>
    </location>
</feature>
<feature type="strand" evidence="14">
    <location>
        <begin position="416"/>
        <end position="418"/>
    </location>
</feature>
<feature type="strand" evidence="14">
    <location>
        <begin position="421"/>
        <end position="424"/>
    </location>
</feature>
<feature type="strand" evidence="14">
    <location>
        <begin position="436"/>
        <end position="438"/>
    </location>
</feature>
<keyword id="KW-0002">3D-structure</keyword>
<keyword id="KW-0067">ATP-binding</keyword>
<keyword id="KW-1015">Disulfide bond</keyword>
<keyword id="KW-0325">Glycoprotein</keyword>
<keyword id="KW-0418">Kinase</keyword>
<keyword id="KW-0433">Leucine-rich repeat</keyword>
<keyword id="KW-0472">Membrane</keyword>
<keyword id="KW-0547">Nucleotide-binding</keyword>
<keyword id="KW-0675">Receptor</keyword>
<keyword id="KW-1185">Reference proteome</keyword>
<keyword id="KW-0677">Repeat</keyword>
<keyword id="KW-0723">Serine/threonine-protein kinase</keyword>
<keyword id="KW-0732">Signal</keyword>
<keyword id="KW-0808">Transferase</keyword>
<keyword id="KW-0812">Transmembrane</keyword>
<keyword id="KW-1133">Transmembrane helix</keyword>
<evidence type="ECO:0000250" key="1">
    <source>
        <dbReference type="UniProtKB" id="P43298"/>
    </source>
</evidence>
<evidence type="ECO:0000255" key="2"/>
<evidence type="ECO:0000255" key="3">
    <source>
        <dbReference type="PROSITE-ProRule" id="PRU00159"/>
    </source>
</evidence>
<evidence type="ECO:0000255" key="4">
    <source>
        <dbReference type="PROSITE-ProRule" id="PRU00498"/>
    </source>
</evidence>
<evidence type="ECO:0000256" key="5">
    <source>
        <dbReference type="SAM" id="MobiDB-lite"/>
    </source>
</evidence>
<evidence type="ECO:0000269" key="6">
    <source>
    </source>
</evidence>
<evidence type="ECO:0000269" key="7">
    <source>
    </source>
</evidence>
<evidence type="ECO:0000303" key="8">
    <source>
    </source>
</evidence>
<evidence type="ECO:0000303" key="9">
    <source>
    </source>
</evidence>
<evidence type="ECO:0000305" key="10"/>
<evidence type="ECO:0000312" key="11">
    <source>
        <dbReference type="Araport" id="AT2G01820"/>
    </source>
</evidence>
<evidence type="ECO:0000312" key="12">
    <source>
        <dbReference type="EMBL" id="AAD21776.1"/>
    </source>
</evidence>
<evidence type="ECO:0000312" key="13">
    <source>
        <dbReference type="Proteomes" id="UP000006548"/>
    </source>
</evidence>
<evidence type="ECO:0007829" key="14">
    <source>
        <dbReference type="PDB" id="7BRC"/>
    </source>
</evidence>
<proteinExistence type="evidence at protein level"/>
<organism evidence="13">
    <name type="scientific">Arabidopsis thaliana</name>
    <name type="common">Mouse-ear cress</name>
    <dbReference type="NCBI Taxonomy" id="3702"/>
    <lineage>
        <taxon>Eukaryota</taxon>
        <taxon>Viridiplantae</taxon>
        <taxon>Streptophyta</taxon>
        <taxon>Embryophyta</taxon>
        <taxon>Tracheophyta</taxon>
        <taxon>Spermatophyta</taxon>
        <taxon>Magnoliopsida</taxon>
        <taxon>eudicotyledons</taxon>
        <taxon>Gunneridae</taxon>
        <taxon>Pentapetalae</taxon>
        <taxon>rosids</taxon>
        <taxon>malvids</taxon>
        <taxon>Brassicales</taxon>
        <taxon>Brassicaceae</taxon>
        <taxon>Camelineae</taxon>
        <taxon>Arabidopsis</taxon>
    </lineage>
</organism>